<keyword id="KW-0028">Amino-acid biosynthesis</keyword>
<keyword id="KW-0055">Arginine biosynthesis</keyword>
<keyword id="KW-0963">Cytoplasm</keyword>
<keyword id="KW-0238">DNA-binding</keyword>
<keyword id="KW-0678">Repressor</keyword>
<keyword id="KW-0804">Transcription</keyword>
<keyword id="KW-0805">Transcription regulation</keyword>
<feature type="chain" id="PRO_1000023607" description="Arginine repressor">
    <location>
        <begin position="1"/>
        <end position="150"/>
    </location>
</feature>
<protein>
    <recommendedName>
        <fullName evidence="1">Arginine repressor</fullName>
    </recommendedName>
</protein>
<dbReference type="EMBL" id="AP006716">
    <property type="protein sequence ID" value="BAE04704.1"/>
    <property type="molecule type" value="Genomic_DNA"/>
</dbReference>
<dbReference type="RefSeq" id="WP_011275691.1">
    <property type="nucleotide sequence ID" value="NC_007168.1"/>
</dbReference>
<dbReference type="SMR" id="Q4L6M1"/>
<dbReference type="GeneID" id="93780794"/>
<dbReference type="KEGG" id="sha:SH1395"/>
<dbReference type="eggNOG" id="COG1438">
    <property type="taxonomic scope" value="Bacteria"/>
</dbReference>
<dbReference type="HOGENOM" id="CLU_097103_3_0_9"/>
<dbReference type="OrthoDB" id="9807089at2"/>
<dbReference type="UniPathway" id="UPA00068"/>
<dbReference type="Proteomes" id="UP000000543">
    <property type="component" value="Chromosome"/>
</dbReference>
<dbReference type="GO" id="GO:0005737">
    <property type="term" value="C:cytoplasm"/>
    <property type="evidence" value="ECO:0007669"/>
    <property type="project" value="UniProtKB-SubCell"/>
</dbReference>
<dbReference type="GO" id="GO:0034618">
    <property type="term" value="F:arginine binding"/>
    <property type="evidence" value="ECO:0007669"/>
    <property type="project" value="InterPro"/>
</dbReference>
<dbReference type="GO" id="GO:0003677">
    <property type="term" value="F:DNA binding"/>
    <property type="evidence" value="ECO:0007669"/>
    <property type="project" value="UniProtKB-KW"/>
</dbReference>
<dbReference type="GO" id="GO:0003700">
    <property type="term" value="F:DNA-binding transcription factor activity"/>
    <property type="evidence" value="ECO:0007669"/>
    <property type="project" value="UniProtKB-UniRule"/>
</dbReference>
<dbReference type="GO" id="GO:0006526">
    <property type="term" value="P:L-arginine biosynthetic process"/>
    <property type="evidence" value="ECO:0007669"/>
    <property type="project" value="UniProtKB-UniPathway"/>
</dbReference>
<dbReference type="GO" id="GO:0051259">
    <property type="term" value="P:protein complex oligomerization"/>
    <property type="evidence" value="ECO:0007669"/>
    <property type="project" value="InterPro"/>
</dbReference>
<dbReference type="GO" id="GO:1900079">
    <property type="term" value="P:regulation of arginine biosynthetic process"/>
    <property type="evidence" value="ECO:0007669"/>
    <property type="project" value="UniProtKB-UniRule"/>
</dbReference>
<dbReference type="Gene3D" id="3.30.1360.40">
    <property type="match status" value="1"/>
</dbReference>
<dbReference type="Gene3D" id="1.10.10.10">
    <property type="entry name" value="Winged helix-like DNA-binding domain superfamily/Winged helix DNA-binding domain"/>
    <property type="match status" value="1"/>
</dbReference>
<dbReference type="HAMAP" id="MF_00173">
    <property type="entry name" value="Arg_repressor"/>
    <property type="match status" value="1"/>
</dbReference>
<dbReference type="InterPro" id="IPR001669">
    <property type="entry name" value="Arg_repress"/>
</dbReference>
<dbReference type="InterPro" id="IPR020899">
    <property type="entry name" value="Arg_repress_C"/>
</dbReference>
<dbReference type="InterPro" id="IPR036251">
    <property type="entry name" value="Arg_repress_C_sf"/>
</dbReference>
<dbReference type="InterPro" id="IPR020900">
    <property type="entry name" value="Arg_repress_DNA-bd"/>
</dbReference>
<dbReference type="InterPro" id="IPR036388">
    <property type="entry name" value="WH-like_DNA-bd_sf"/>
</dbReference>
<dbReference type="InterPro" id="IPR036390">
    <property type="entry name" value="WH_DNA-bd_sf"/>
</dbReference>
<dbReference type="NCBIfam" id="TIGR01529">
    <property type="entry name" value="argR_whole"/>
    <property type="match status" value="1"/>
</dbReference>
<dbReference type="NCBIfam" id="NF003281">
    <property type="entry name" value="PRK04280.1"/>
    <property type="match status" value="1"/>
</dbReference>
<dbReference type="PANTHER" id="PTHR34471">
    <property type="entry name" value="ARGININE REPRESSOR"/>
    <property type="match status" value="1"/>
</dbReference>
<dbReference type="PANTHER" id="PTHR34471:SF1">
    <property type="entry name" value="ARGININE REPRESSOR"/>
    <property type="match status" value="1"/>
</dbReference>
<dbReference type="Pfam" id="PF01316">
    <property type="entry name" value="Arg_repressor"/>
    <property type="match status" value="1"/>
</dbReference>
<dbReference type="Pfam" id="PF02863">
    <property type="entry name" value="Arg_repressor_C"/>
    <property type="match status" value="1"/>
</dbReference>
<dbReference type="PRINTS" id="PR01467">
    <property type="entry name" value="ARGREPRESSOR"/>
</dbReference>
<dbReference type="SUPFAM" id="SSF55252">
    <property type="entry name" value="C-terminal domain of arginine repressor"/>
    <property type="match status" value="1"/>
</dbReference>
<dbReference type="SUPFAM" id="SSF46785">
    <property type="entry name" value="Winged helix' DNA-binding domain"/>
    <property type="match status" value="1"/>
</dbReference>
<reference key="1">
    <citation type="journal article" date="2005" name="J. Bacteriol.">
        <title>Whole-genome sequencing of Staphylococcus haemolyticus uncovers the extreme plasticity of its genome and the evolution of human-colonizing staphylococcal species.</title>
        <authorList>
            <person name="Takeuchi F."/>
            <person name="Watanabe S."/>
            <person name="Baba T."/>
            <person name="Yuzawa H."/>
            <person name="Ito T."/>
            <person name="Morimoto Y."/>
            <person name="Kuroda M."/>
            <person name="Cui L."/>
            <person name="Takahashi M."/>
            <person name="Ankai A."/>
            <person name="Baba S."/>
            <person name="Fukui S."/>
            <person name="Lee J.C."/>
            <person name="Hiramatsu K."/>
        </authorList>
    </citation>
    <scope>NUCLEOTIDE SEQUENCE [LARGE SCALE GENOMIC DNA]</scope>
    <source>
        <strain>JCSC1435</strain>
    </source>
</reference>
<accession>Q4L6M1</accession>
<sequence length="150" mass="16947">MAKKSVRHIKIREIISSEQIETQDELVKRLNEYDLNVTQATVSRDIKELQLIKVPAPSGQYVYSLPNDRKYHPLEKLGRYLMDSFVNIEGTGNLLVLKTLPGNAQSIGAILDQIDWDEVLGTICGDDTCLLICKDEDASNTIKTRIFNLL</sequence>
<evidence type="ECO:0000255" key="1">
    <source>
        <dbReference type="HAMAP-Rule" id="MF_00173"/>
    </source>
</evidence>
<organism>
    <name type="scientific">Staphylococcus haemolyticus (strain JCSC1435)</name>
    <dbReference type="NCBI Taxonomy" id="279808"/>
    <lineage>
        <taxon>Bacteria</taxon>
        <taxon>Bacillati</taxon>
        <taxon>Bacillota</taxon>
        <taxon>Bacilli</taxon>
        <taxon>Bacillales</taxon>
        <taxon>Staphylococcaceae</taxon>
        <taxon>Staphylococcus</taxon>
    </lineage>
</organism>
<proteinExistence type="inferred from homology"/>
<name>ARGR_STAHJ</name>
<comment type="function">
    <text evidence="1">Regulates arginine biosynthesis genes.</text>
</comment>
<comment type="pathway">
    <text>Amino-acid biosynthesis; L-arginine biosynthesis [regulation].</text>
</comment>
<comment type="subcellular location">
    <subcellularLocation>
        <location evidence="1">Cytoplasm</location>
    </subcellularLocation>
</comment>
<comment type="similarity">
    <text evidence="1">Belongs to the ArgR family.</text>
</comment>
<gene>
    <name evidence="1" type="primary">argR</name>
    <name type="ordered locus">SH1395</name>
</gene>